<name>HEM3_CAMJR</name>
<organism>
    <name type="scientific">Campylobacter jejuni (strain RM1221)</name>
    <dbReference type="NCBI Taxonomy" id="195099"/>
    <lineage>
        <taxon>Bacteria</taxon>
        <taxon>Pseudomonadati</taxon>
        <taxon>Campylobacterota</taxon>
        <taxon>Epsilonproteobacteria</taxon>
        <taxon>Campylobacterales</taxon>
        <taxon>Campylobacteraceae</taxon>
        <taxon>Campylobacter</taxon>
    </lineage>
</organism>
<gene>
    <name evidence="1" type="primary">hemC</name>
    <name type="ordered locus">CJE0649</name>
</gene>
<feature type="chain" id="PRO_0000304223" description="Porphobilinogen deaminase">
    <location>
        <begin position="1"/>
        <end position="307"/>
    </location>
</feature>
<feature type="modified residue" description="S-(dipyrrolylmethanemethyl)cysteine" evidence="1">
    <location>
        <position position="239"/>
    </location>
</feature>
<accession>Q5HVM1</accession>
<comment type="function">
    <text evidence="1">Tetrapolymerization of the monopyrrole PBG into the hydroxymethylbilane pre-uroporphyrinogen in several discrete steps.</text>
</comment>
<comment type="catalytic activity">
    <reaction evidence="1">
        <text>4 porphobilinogen + H2O = hydroxymethylbilane + 4 NH4(+)</text>
        <dbReference type="Rhea" id="RHEA:13185"/>
        <dbReference type="ChEBI" id="CHEBI:15377"/>
        <dbReference type="ChEBI" id="CHEBI:28938"/>
        <dbReference type="ChEBI" id="CHEBI:57845"/>
        <dbReference type="ChEBI" id="CHEBI:58126"/>
        <dbReference type="EC" id="2.5.1.61"/>
    </reaction>
</comment>
<comment type="cofactor">
    <cofactor evidence="1">
        <name>dipyrromethane</name>
        <dbReference type="ChEBI" id="CHEBI:60342"/>
    </cofactor>
    <text evidence="1">Binds 1 dipyrromethane group covalently.</text>
</comment>
<comment type="pathway">
    <text evidence="1">Porphyrin-containing compound metabolism; protoporphyrin-IX biosynthesis; coproporphyrinogen-III from 5-aminolevulinate: step 2/4.</text>
</comment>
<comment type="subunit">
    <text evidence="1">Monomer.</text>
</comment>
<comment type="miscellaneous">
    <text evidence="1">The porphobilinogen subunits are added to the dipyrromethane group.</text>
</comment>
<comment type="similarity">
    <text evidence="1">Belongs to the HMBS family.</text>
</comment>
<keyword id="KW-0627">Porphyrin biosynthesis</keyword>
<keyword id="KW-0808">Transferase</keyword>
<proteinExistence type="inferred from homology"/>
<sequence>MKLIIATRKSQLALWQSEHVAQILKNTHQIEVLLEGFKTKGDVLLDSPLAKIGGKGLFTKELEESMLRKEAHLAVHSLKDVPSFFPQGLVLAAVSKREQSNDAMLSQNYKDFLSLPKGAKIGTTSLRRKMQLLLLRPDLDIISLRGNVNSRIEKLKNNDFDAIILAMAGIKRLNLDKQVNFVYEFSKDELIPAASQGALGIESINDEKILELLKCLNDENALIETSIEREFIATLEGGCQVPIGINAELLGDEICVRAVLGLPDGSEILKDKRMIKKNDFKGFGESLAKEFIAKGAKELLKKAESMI</sequence>
<protein>
    <recommendedName>
        <fullName evidence="1">Porphobilinogen deaminase</fullName>
        <shortName evidence="1">PBG</shortName>
        <ecNumber evidence="1">2.5.1.61</ecNumber>
    </recommendedName>
    <alternativeName>
        <fullName evidence="1">Hydroxymethylbilane synthase</fullName>
        <shortName evidence="1">HMBS</shortName>
    </alternativeName>
    <alternativeName>
        <fullName evidence="1">Pre-uroporphyrinogen synthase</fullName>
    </alternativeName>
</protein>
<reference key="1">
    <citation type="journal article" date="2005" name="PLoS Biol.">
        <title>Major structural differences and novel potential virulence mechanisms from the genomes of multiple Campylobacter species.</title>
        <authorList>
            <person name="Fouts D.E."/>
            <person name="Mongodin E.F."/>
            <person name="Mandrell R.E."/>
            <person name="Miller W.G."/>
            <person name="Rasko D.A."/>
            <person name="Ravel J."/>
            <person name="Brinkac L.M."/>
            <person name="DeBoy R.T."/>
            <person name="Parker C.T."/>
            <person name="Daugherty S.C."/>
            <person name="Dodson R.J."/>
            <person name="Durkin A.S."/>
            <person name="Madupu R."/>
            <person name="Sullivan S.A."/>
            <person name="Shetty J.U."/>
            <person name="Ayodeji M.A."/>
            <person name="Shvartsbeyn A."/>
            <person name="Schatz M.C."/>
            <person name="Badger J.H."/>
            <person name="Fraser C.M."/>
            <person name="Nelson K.E."/>
        </authorList>
    </citation>
    <scope>NUCLEOTIDE SEQUENCE [LARGE SCALE GENOMIC DNA]</scope>
    <source>
        <strain>RM1221</strain>
    </source>
</reference>
<dbReference type="EC" id="2.5.1.61" evidence="1"/>
<dbReference type="EMBL" id="CP000025">
    <property type="protein sequence ID" value="AAW35838.1"/>
    <property type="molecule type" value="Genomic_DNA"/>
</dbReference>
<dbReference type="RefSeq" id="WP_002820769.1">
    <property type="nucleotide sequence ID" value="NC_003912.7"/>
</dbReference>
<dbReference type="SMR" id="Q5HVM1"/>
<dbReference type="KEGG" id="cjr:CJE0649"/>
<dbReference type="HOGENOM" id="CLU_019704_1_0_7"/>
<dbReference type="UniPathway" id="UPA00251">
    <property type="reaction ID" value="UER00319"/>
</dbReference>
<dbReference type="GO" id="GO:0005737">
    <property type="term" value="C:cytoplasm"/>
    <property type="evidence" value="ECO:0007669"/>
    <property type="project" value="TreeGrafter"/>
</dbReference>
<dbReference type="GO" id="GO:0004418">
    <property type="term" value="F:hydroxymethylbilane synthase activity"/>
    <property type="evidence" value="ECO:0007669"/>
    <property type="project" value="UniProtKB-UniRule"/>
</dbReference>
<dbReference type="GO" id="GO:0006782">
    <property type="term" value="P:protoporphyrinogen IX biosynthetic process"/>
    <property type="evidence" value="ECO:0007669"/>
    <property type="project" value="UniProtKB-UniRule"/>
</dbReference>
<dbReference type="CDD" id="cd13646">
    <property type="entry name" value="PBP2_EcHMBS_like"/>
    <property type="match status" value="1"/>
</dbReference>
<dbReference type="FunFam" id="3.40.190.10:FF:000004">
    <property type="entry name" value="Porphobilinogen deaminase"/>
    <property type="match status" value="1"/>
</dbReference>
<dbReference type="FunFam" id="3.40.190.10:FF:000005">
    <property type="entry name" value="Porphobilinogen deaminase"/>
    <property type="match status" value="1"/>
</dbReference>
<dbReference type="Gene3D" id="3.40.190.10">
    <property type="entry name" value="Periplasmic binding protein-like II"/>
    <property type="match status" value="2"/>
</dbReference>
<dbReference type="Gene3D" id="3.30.160.40">
    <property type="entry name" value="Porphobilinogen deaminase, C-terminal domain"/>
    <property type="match status" value="1"/>
</dbReference>
<dbReference type="HAMAP" id="MF_00260">
    <property type="entry name" value="Porphobil_deam"/>
    <property type="match status" value="1"/>
</dbReference>
<dbReference type="InterPro" id="IPR000860">
    <property type="entry name" value="HemC"/>
</dbReference>
<dbReference type="InterPro" id="IPR022419">
    <property type="entry name" value="Porphobilin_deaminase_cofac_BS"/>
</dbReference>
<dbReference type="InterPro" id="IPR022417">
    <property type="entry name" value="Porphobilin_deaminase_N"/>
</dbReference>
<dbReference type="InterPro" id="IPR022418">
    <property type="entry name" value="Porphobilinogen_deaminase_C"/>
</dbReference>
<dbReference type="InterPro" id="IPR036803">
    <property type="entry name" value="Porphobilinogen_deaminase_C_sf"/>
</dbReference>
<dbReference type="NCBIfam" id="TIGR00212">
    <property type="entry name" value="hemC"/>
    <property type="match status" value="1"/>
</dbReference>
<dbReference type="PANTHER" id="PTHR11557">
    <property type="entry name" value="PORPHOBILINOGEN DEAMINASE"/>
    <property type="match status" value="1"/>
</dbReference>
<dbReference type="PANTHER" id="PTHR11557:SF0">
    <property type="entry name" value="PORPHOBILINOGEN DEAMINASE"/>
    <property type="match status" value="1"/>
</dbReference>
<dbReference type="Pfam" id="PF01379">
    <property type="entry name" value="Porphobil_deam"/>
    <property type="match status" value="1"/>
</dbReference>
<dbReference type="Pfam" id="PF03900">
    <property type="entry name" value="Porphobil_deamC"/>
    <property type="match status" value="1"/>
</dbReference>
<dbReference type="PIRSF" id="PIRSF001438">
    <property type="entry name" value="4pyrrol_synth_OHMeBilane_synth"/>
    <property type="match status" value="1"/>
</dbReference>
<dbReference type="PRINTS" id="PR00151">
    <property type="entry name" value="PORPHBDMNASE"/>
</dbReference>
<dbReference type="SUPFAM" id="SSF53850">
    <property type="entry name" value="Periplasmic binding protein-like II"/>
    <property type="match status" value="1"/>
</dbReference>
<dbReference type="SUPFAM" id="SSF54782">
    <property type="entry name" value="Porphobilinogen deaminase (hydroxymethylbilane synthase), C-terminal domain"/>
    <property type="match status" value="1"/>
</dbReference>
<dbReference type="PROSITE" id="PS00533">
    <property type="entry name" value="PORPHOBILINOGEN_DEAM"/>
    <property type="match status" value="1"/>
</dbReference>
<evidence type="ECO:0000255" key="1">
    <source>
        <dbReference type="HAMAP-Rule" id="MF_00260"/>
    </source>
</evidence>